<name>ENO_HALHL</name>
<accession>A1WWZ2</accession>
<proteinExistence type="inferred from homology"/>
<feature type="chain" id="PRO_1000019212" description="Enolase">
    <location>
        <begin position="1"/>
        <end position="428"/>
    </location>
</feature>
<feature type="active site" description="Proton donor" evidence="1">
    <location>
        <position position="205"/>
    </location>
</feature>
<feature type="active site" description="Proton acceptor" evidence="1">
    <location>
        <position position="337"/>
    </location>
</feature>
<feature type="binding site" evidence="1">
    <location>
        <position position="163"/>
    </location>
    <ligand>
        <name>(2R)-2-phosphoglycerate</name>
        <dbReference type="ChEBI" id="CHEBI:58289"/>
    </ligand>
</feature>
<feature type="binding site" evidence="1">
    <location>
        <position position="242"/>
    </location>
    <ligand>
        <name>Mg(2+)</name>
        <dbReference type="ChEBI" id="CHEBI:18420"/>
    </ligand>
</feature>
<feature type="binding site" evidence="1">
    <location>
        <position position="285"/>
    </location>
    <ligand>
        <name>Mg(2+)</name>
        <dbReference type="ChEBI" id="CHEBI:18420"/>
    </ligand>
</feature>
<feature type="binding site" evidence="1">
    <location>
        <position position="312"/>
    </location>
    <ligand>
        <name>Mg(2+)</name>
        <dbReference type="ChEBI" id="CHEBI:18420"/>
    </ligand>
</feature>
<feature type="binding site" evidence="1">
    <location>
        <position position="337"/>
    </location>
    <ligand>
        <name>(2R)-2-phosphoglycerate</name>
        <dbReference type="ChEBI" id="CHEBI:58289"/>
    </ligand>
</feature>
<feature type="binding site" evidence="1">
    <location>
        <position position="366"/>
    </location>
    <ligand>
        <name>(2R)-2-phosphoglycerate</name>
        <dbReference type="ChEBI" id="CHEBI:58289"/>
    </ligand>
</feature>
<feature type="binding site" evidence="1">
    <location>
        <position position="367"/>
    </location>
    <ligand>
        <name>(2R)-2-phosphoglycerate</name>
        <dbReference type="ChEBI" id="CHEBI:58289"/>
    </ligand>
</feature>
<feature type="binding site" evidence="1">
    <location>
        <position position="388"/>
    </location>
    <ligand>
        <name>(2R)-2-phosphoglycerate</name>
        <dbReference type="ChEBI" id="CHEBI:58289"/>
    </ligand>
</feature>
<gene>
    <name evidence="1" type="primary">eno</name>
    <name type="ordered locus">Hhal_1437</name>
</gene>
<protein>
    <recommendedName>
        <fullName evidence="1">Enolase</fullName>
        <ecNumber evidence="1">4.2.1.11</ecNumber>
    </recommendedName>
    <alternativeName>
        <fullName evidence="1">2-phospho-D-glycerate hydro-lyase</fullName>
    </alternativeName>
    <alternativeName>
        <fullName evidence="1">2-phosphoglycerate dehydratase</fullName>
    </alternativeName>
</protein>
<comment type="function">
    <text evidence="1">Catalyzes the reversible conversion of 2-phosphoglycerate (2-PG) into phosphoenolpyruvate (PEP). It is essential for the degradation of carbohydrates via glycolysis.</text>
</comment>
<comment type="catalytic activity">
    <reaction evidence="1">
        <text>(2R)-2-phosphoglycerate = phosphoenolpyruvate + H2O</text>
        <dbReference type="Rhea" id="RHEA:10164"/>
        <dbReference type="ChEBI" id="CHEBI:15377"/>
        <dbReference type="ChEBI" id="CHEBI:58289"/>
        <dbReference type="ChEBI" id="CHEBI:58702"/>
        <dbReference type="EC" id="4.2.1.11"/>
    </reaction>
</comment>
<comment type="cofactor">
    <cofactor evidence="1">
        <name>Mg(2+)</name>
        <dbReference type="ChEBI" id="CHEBI:18420"/>
    </cofactor>
    <text evidence="1">Binds a second Mg(2+) ion via substrate during catalysis.</text>
</comment>
<comment type="pathway">
    <text evidence="1">Carbohydrate degradation; glycolysis; pyruvate from D-glyceraldehyde 3-phosphate: step 4/5.</text>
</comment>
<comment type="subunit">
    <text evidence="1">Component of the RNA degradosome, a multiprotein complex involved in RNA processing and mRNA degradation.</text>
</comment>
<comment type="subcellular location">
    <subcellularLocation>
        <location evidence="1">Cytoplasm</location>
    </subcellularLocation>
    <subcellularLocation>
        <location evidence="1">Secreted</location>
    </subcellularLocation>
    <subcellularLocation>
        <location evidence="1">Cell surface</location>
    </subcellularLocation>
    <text evidence="1">Fractions of enolase are present in both the cytoplasm and on the cell surface.</text>
</comment>
<comment type="similarity">
    <text evidence="1">Belongs to the enolase family.</text>
</comment>
<evidence type="ECO:0000255" key="1">
    <source>
        <dbReference type="HAMAP-Rule" id="MF_00318"/>
    </source>
</evidence>
<keyword id="KW-0963">Cytoplasm</keyword>
<keyword id="KW-0324">Glycolysis</keyword>
<keyword id="KW-0456">Lyase</keyword>
<keyword id="KW-0460">Magnesium</keyword>
<keyword id="KW-0479">Metal-binding</keyword>
<keyword id="KW-1185">Reference proteome</keyword>
<keyword id="KW-0964">Secreted</keyword>
<reference key="1">
    <citation type="submission" date="2006-12" db="EMBL/GenBank/DDBJ databases">
        <title>Complete sequence of Halorhodospira halophila SL1.</title>
        <authorList>
            <consortium name="US DOE Joint Genome Institute"/>
            <person name="Copeland A."/>
            <person name="Lucas S."/>
            <person name="Lapidus A."/>
            <person name="Barry K."/>
            <person name="Detter J.C."/>
            <person name="Glavina del Rio T."/>
            <person name="Hammon N."/>
            <person name="Israni S."/>
            <person name="Dalin E."/>
            <person name="Tice H."/>
            <person name="Pitluck S."/>
            <person name="Saunders E."/>
            <person name="Brettin T."/>
            <person name="Bruce D."/>
            <person name="Han C."/>
            <person name="Tapia R."/>
            <person name="Schmutz J."/>
            <person name="Larimer F."/>
            <person name="Land M."/>
            <person name="Hauser L."/>
            <person name="Kyrpides N."/>
            <person name="Mikhailova N."/>
            <person name="Hoff W."/>
            <person name="Richardson P."/>
        </authorList>
    </citation>
    <scope>NUCLEOTIDE SEQUENCE [LARGE SCALE GENOMIC DNA]</scope>
    <source>
        <strain>DSM 244 / SL1</strain>
    </source>
</reference>
<organism>
    <name type="scientific">Halorhodospira halophila (strain DSM 244 / SL1)</name>
    <name type="common">Ectothiorhodospira halophila (strain DSM 244 / SL1)</name>
    <dbReference type="NCBI Taxonomy" id="349124"/>
    <lineage>
        <taxon>Bacteria</taxon>
        <taxon>Pseudomonadati</taxon>
        <taxon>Pseudomonadota</taxon>
        <taxon>Gammaproteobacteria</taxon>
        <taxon>Chromatiales</taxon>
        <taxon>Ectothiorhodospiraceae</taxon>
        <taxon>Halorhodospira</taxon>
    </lineage>
</organism>
<dbReference type="EC" id="4.2.1.11" evidence="1"/>
<dbReference type="EMBL" id="CP000544">
    <property type="protein sequence ID" value="ABM62204.1"/>
    <property type="molecule type" value="Genomic_DNA"/>
</dbReference>
<dbReference type="RefSeq" id="WP_011814226.1">
    <property type="nucleotide sequence ID" value="NC_008789.1"/>
</dbReference>
<dbReference type="SMR" id="A1WWZ2"/>
<dbReference type="STRING" id="349124.Hhal_1437"/>
<dbReference type="KEGG" id="hha:Hhal_1437"/>
<dbReference type="eggNOG" id="COG0148">
    <property type="taxonomic scope" value="Bacteria"/>
</dbReference>
<dbReference type="HOGENOM" id="CLU_031223_2_1_6"/>
<dbReference type="OrthoDB" id="9804716at2"/>
<dbReference type="UniPathway" id="UPA00109">
    <property type="reaction ID" value="UER00187"/>
</dbReference>
<dbReference type="Proteomes" id="UP000000647">
    <property type="component" value="Chromosome"/>
</dbReference>
<dbReference type="GO" id="GO:0009986">
    <property type="term" value="C:cell surface"/>
    <property type="evidence" value="ECO:0007669"/>
    <property type="project" value="UniProtKB-SubCell"/>
</dbReference>
<dbReference type="GO" id="GO:0005576">
    <property type="term" value="C:extracellular region"/>
    <property type="evidence" value="ECO:0007669"/>
    <property type="project" value="UniProtKB-SubCell"/>
</dbReference>
<dbReference type="GO" id="GO:0000015">
    <property type="term" value="C:phosphopyruvate hydratase complex"/>
    <property type="evidence" value="ECO:0007669"/>
    <property type="project" value="InterPro"/>
</dbReference>
<dbReference type="GO" id="GO:0000287">
    <property type="term" value="F:magnesium ion binding"/>
    <property type="evidence" value="ECO:0007669"/>
    <property type="project" value="UniProtKB-UniRule"/>
</dbReference>
<dbReference type="GO" id="GO:0004634">
    <property type="term" value="F:phosphopyruvate hydratase activity"/>
    <property type="evidence" value="ECO:0007669"/>
    <property type="project" value="UniProtKB-UniRule"/>
</dbReference>
<dbReference type="GO" id="GO:0006096">
    <property type="term" value="P:glycolytic process"/>
    <property type="evidence" value="ECO:0007669"/>
    <property type="project" value="UniProtKB-UniRule"/>
</dbReference>
<dbReference type="CDD" id="cd03313">
    <property type="entry name" value="enolase"/>
    <property type="match status" value="1"/>
</dbReference>
<dbReference type="FunFam" id="3.20.20.120:FF:000001">
    <property type="entry name" value="Enolase"/>
    <property type="match status" value="1"/>
</dbReference>
<dbReference type="FunFam" id="3.30.390.10:FF:000001">
    <property type="entry name" value="Enolase"/>
    <property type="match status" value="1"/>
</dbReference>
<dbReference type="Gene3D" id="3.20.20.120">
    <property type="entry name" value="Enolase-like C-terminal domain"/>
    <property type="match status" value="1"/>
</dbReference>
<dbReference type="Gene3D" id="3.30.390.10">
    <property type="entry name" value="Enolase-like, N-terminal domain"/>
    <property type="match status" value="1"/>
</dbReference>
<dbReference type="HAMAP" id="MF_00318">
    <property type="entry name" value="Enolase"/>
    <property type="match status" value="1"/>
</dbReference>
<dbReference type="InterPro" id="IPR000941">
    <property type="entry name" value="Enolase"/>
</dbReference>
<dbReference type="InterPro" id="IPR036849">
    <property type="entry name" value="Enolase-like_C_sf"/>
</dbReference>
<dbReference type="InterPro" id="IPR029017">
    <property type="entry name" value="Enolase-like_N"/>
</dbReference>
<dbReference type="InterPro" id="IPR020810">
    <property type="entry name" value="Enolase_C"/>
</dbReference>
<dbReference type="InterPro" id="IPR020809">
    <property type="entry name" value="Enolase_CS"/>
</dbReference>
<dbReference type="InterPro" id="IPR020811">
    <property type="entry name" value="Enolase_N"/>
</dbReference>
<dbReference type="NCBIfam" id="TIGR01060">
    <property type="entry name" value="eno"/>
    <property type="match status" value="1"/>
</dbReference>
<dbReference type="PANTHER" id="PTHR11902">
    <property type="entry name" value="ENOLASE"/>
    <property type="match status" value="1"/>
</dbReference>
<dbReference type="PANTHER" id="PTHR11902:SF1">
    <property type="entry name" value="ENOLASE"/>
    <property type="match status" value="1"/>
</dbReference>
<dbReference type="Pfam" id="PF00113">
    <property type="entry name" value="Enolase_C"/>
    <property type="match status" value="1"/>
</dbReference>
<dbReference type="Pfam" id="PF03952">
    <property type="entry name" value="Enolase_N"/>
    <property type="match status" value="1"/>
</dbReference>
<dbReference type="PIRSF" id="PIRSF001400">
    <property type="entry name" value="Enolase"/>
    <property type="match status" value="1"/>
</dbReference>
<dbReference type="PRINTS" id="PR00148">
    <property type="entry name" value="ENOLASE"/>
</dbReference>
<dbReference type="SFLD" id="SFLDS00001">
    <property type="entry name" value="Enolase"/>
    <property type="match status" value="1"/>
</dbReference>
<dbReference type="SFLD" id="SFLDF00002">
    <property type="entry name" value="enolase"/>
    <property type="match status" value="1"/>
</dbReference>
<dbReference type="SMART" id="SM01192">
    <property type="entry name" value="Enolase_C"/>
    <property type="match status" value="1"/>
</dbReference>
<dbReference type="SMART" id="SM01193">
    <property type="entry name" value="Enolase_N"/>
    <property type="match status" value="1"/>
</dbReference>
<dbReference type="SUPFAM" id="SSF51604">
    <property type="entry name" value="Enolase C-terminal domain-like"/>
    <property type="match status" value="1"/>
</dbReference>
<dbReference type="SUPFAM" id="SSF54826">
    <property type="entry name" value="Enolase N-terminal domain-like"/>
    <property type="match status" value="1"/>
</dbReference>
<dbReference type="PROSITE" id="PS00164">
    <property type="entry name" value="ENOLASE"/>
    <property type="match status" value="1"/>
</dbReference>
<sequence length="428" mass="45978">MANIERVIGREVLDSRGNPTVEADVWLDDGSFGRAAVPSGASTGSREAVELRDGGGRYNGKGVRTAVENVNTTIREALQGGSADDQAALDRQLIDLDGSPNKDRLGANAILAVSMAVAQAAARSRGLPLYRHLQQEGSAAQLPAPMMNILNGGEHADNSVDIQEFMIMPIGFDRFSEALRCGAEIFHALKKVLHERGLSTAVGDEGGFAPDLPSNEAALEAIIEAIQRAGYQAGDQVALALDVASSELYRDGRYHLASEGRDFDAAGFADYLAQLVDKYPIVSIEDGMDESDWDGWKVLTERLGGQIQLVGDDLFVTNPQILQQGIDRGIANSILIKLNQIGTVTETLEAIRMADEAGYTSVVSHRSGETEDVAIADLAVATRATQIKTGSLCRSDRVAKYNQLLRIEQELGDDARYVGRDALRPEQG</sequence>